<name>ENO_LATSS</name>
<comment type="function">
    <text evidence="1">Catalyzes the reversible conversion of 2-phosphoglycerate (2-PG) into phosphoenolpyruvate (PEP). It is essential for the degradation of carbohydrates via glycolysis.</text>
</comment>
<comment type="catalytic activity">
    <reaction evidence="1">
        <text>(2R)-2-phosphoglycerate = phosphoenolpyruvate + H2O</text>
        <dbReference type="Rhea" id="RHEA:10164"/>
        <dbReference type="ChEBI" id="CHEBI:15377"/>
        <dbReference type="ChEBI" id="CHEBI:58289"/>
        <dbReference type="ChEBI" id="CHEBI:58702"/>
        <dbReference type="EC" id="4.2.1.11"/>
    </reaction>
</comment>
<comment type="cofactor">
    <cofactor evidence="1">
        <name>Mg(2+)</name>
        <dbReference type="ChEBI" id="CHEBI:18420"/>
    </cofactor>
    <text evidence="1">Binds a second Mg(2+) ion via substrate during catalysis.</text>
</comment>
<comment type="pathway">
    <text evidence="1">Carbohydrate degradation; glycolysis; pyruvate from D-glyceraldehyde 3-phosphate: step 4/5.</text>
</comment>
<comment type="subcellular location">
    <subcellularLocation>
        <location evidence="1">Cytoplasm</location>
    </subcellularLocation>
    <subcellularLocation>
        <location evidence="1">Secreted</location>
    </subcellularLocation>
    <subcellularLocation>
        <location evidence="1">Cell surface</location>
    </subcellularLocation>
    <text evidence="1">Fractions of enolase are present in both the cytoplasm and on the cell surface.</text>
</comment>
<comment type="similarity">
    <text evidence="1">Belongs to the enolase family.</text>
</comment>
<sequence>MSIITDILGREVLDSRGNPTVEVEVYTEDGGFGRAIVPSGASTGEHEAVELRDGDKSRFGGKGVLKAVENVNGPLAKEIVGFDTTDQRGIDAAMIKLDGTENKGKLGANAILGVSLAAARAAADELGLPLYEYLGGPNAHVLPTPMMNVINGGAHSDNKVDFQEFMIMPVGAKSVREAIRMGSETFQALKSLLSADGKVTSVGDEGGFAPDFANNEEPLQYLIKAIEKAGYKAGEDISIAIDVASSELWNNEDKTYKLRWSTGEEFTTPEFVKYLEGLVAKYPIISIEDPIDENNWEDWASITKELGEKVQLVGDDFFVTNTDYLRKGIKMGAANSILVKVNQIGTLTESLEAIEMAKEAGYTAVVSHRSGETEDTTIADLVVATNAGQIKTGSMSRTDRLAKYNQLMRIEEQLGDTASYKGINSFYNIKK</sequence>
<evidence type="ECO:0000255" key="1">
    <source>
        <dbReference type="HAMAP-Rule" id="MF_00318"/>
    </source>
</evidence>
<dbReference type="EC" id="4.2.1.11" evidence="1"/>
<dbReference type="EMBL" id="CR936503">
    <property type="protein sequence ID" value="CAI54911.1"/>
    <property type="molecule type" value="Genomic_DNA"/>
</dbReference>
<dbReference type="RefSeq" id="WP_011374316.1">
    <property type="nucleotide sequence ID" value="NC_007576.1"/>
</dbReference>
<dbReference type="SMR" id="Q38Y18"/>
<dbReference type="STRING" id="314315.LCA_0607"/>
<dbReference type="GeneID" id="57133464"/>
<dbReference type="KEGG" id="lsa:LCA_0607"/>
<dbReference type="eggNOG" id="COG0148">
    <property type="taxonomic scope" value="Bacteria"/>
</dbReference>
<dbReference type="HOGENOM" id="CLU_031223_2_1_9"/>
<dbReference type="OrthoDB" id="9804716at2"/>
<dbReference type="UniPathway" id="UPA00109">
    <property type="reaction ID" value="UER00187"/>
</dbReference>
<dbReference type="Proteomes" id="UP000002707">
    <property type="component" value="Chromosome"/>
</dbReference>
<dbReference type="GO" id="GO:0009986">
    <property type="term" value="C:cell surface"/>
    <property type="evidence" value="ECO:0007669"/>
    <property type="project" value="UniProtKB-SubCell"/>
</dbReference>
<dbReference type="GO" id="GO:0005576">
    <property type="term" value="C:extracellular region"/>
    <property type="evidence" value="ECO:0007669"/>
    <property type="project" value="UniProtKB-SubCell"/>
</dbReference>
<dbReference type="GO" id="GO:0000015">
    <property type="term" value="C:phosphopyruvate hydratase complex"/>
    <property type="evidence" value="ECO:0007669"/>
    <property type="project" value="InterPro"/>
</dbReference>
<dbReference type="GO" id="GO:0000287">
    <property type="term" value="F:magnesium ion binding"/>
    <property type="evidence" value="ECO:0007669"/>
    <property type="project" value="UniProtKB-UniRule"/>
</dbReference>
<dbReference type="GO" id="GO:0004634">
    <property type="term" value="F:phosphopyruvate hydratase activity"/>
    <property type="evidence" value="ECO:0007669"/>
    <property type="project" value="UniProtKB-UniRule"/>
</dbReference>
<dbReference type="GO" id="GO:0006096">
    <property type="term" value="P:glycolytic process"/>
    <property type="evidence" value="ECO:0007669"/>
    <property type="project" value="UniProtKB-UniRule"/>
</dbReference>
<dbReference type="CDD" id="cd03313">
    <property type="entry name" value="enolase"/>
    <property type="match status" value="1"/>
</dbReference>
<dbReference type="FunFam" id="3.20.20.120:FF:000001">
    <property type="entry name" value="Enolase"/>
    <property type="match status" value="1"/>
</dbReference>
<dbReference type="FunFam" id="3.30.390.10:FF:000001">
    <property type="entry name" value="Enolase"/>
    <property type="match status" value="1"/>
</dbReference>
<dbReference type="Gene3D" id="3.20.20.120">
    <property type="entry name" value="Enolase-like C-terminal domain"/>
    <property type="match status" value="1"/>
</dbReference>
<dbReference type="Gene3D" id="3.30.390.10">
    <property type="entry name" value="Enolase-like, N-terminal domain"/>
    <property type="match status" value="1"/>
</dbReference>
<dbReference type="HAMAP" id="MF_00318">
    <property type="entry name" value="Enolase"/>
    <property type="match status" value="1"/>
</dbReference>
<dbReference type="InterPro" id="IPR000941">
    <property type="entry name" value="Enolase"/>
</dbReference>
<dbReference type="InterPro" id="IPR036849">
    <property type="entry name" value="Enolase-like_C_sf"/>
</dbReference>
<dbReference type="InterPro" id="IPR029017">
    <property type="entry name" value="Enolase-like_N"/>
</dbReference>
<dbReference type="InterPro" id="IPR020810">
    <property type="entry name" value="Enolase_C"/>
</dbReference>
<dbReference type="InterPro" id="IPR020809">
    <property type="entry name" value="Enolase_CS"/>
</dbReference>
<dbReference type="InterPro" id="IPR020811">
    <property type="entry name" value="Enolase_N"/>
</dbReference>
<dbReference type="NCBIfam" id="TIGR01060">
    <property type="entry name" value="eno"/>
    <property type="match status" value="1"/>
</dbReference>
<dbReference type="PANTHER" id="PTHR11902">
    <property type="entry name" value="ENOLASE"/>
    <property type="match status" value="1"/>
</dbReference>
<dbReference type="PANTHER" id="PTHR11902:SF1">
    <property type="entry name" value="ENOLASE"/>
    <property type="match status" value="1"/>
</dbReference>
<dbReference type="Pfam" id="PF00113">
    <property type="entry name" value="Enolase_C"/>
    <property type="match status" value="1"/>
</dbReference>
<dbReference type="Pfam" id="PF03952">
    <property type="entry name" value="Enolase_N"/>
    <property type="match status" value="1"/>
</dbReference>
<dbReference type="PIRSF" id="PIRSF001400">
    <property type="entry name" value="Enolase"/>
    <property type="match status" value="1"/>
</dbReference>
<dbReference type="PRINTS" id="PR00148">
    <property type="entry name" value="ENOLASE"/>
</dbReference>
<dbReference type="SFLD" id="SFLDS00001">
    <property type="entry name" value="Enolase"/>
    <property type="match status" value="1"/>
</dbReference>
<dbReference type="SFLD" id="SFLDF00002">
    <property type="entry name" value="enolase"/>
    <property type="match status" value="1"/>
</dbReference>
<dbReference type="SMART" id="SM01192">
    <property type="entry name" value="Enolase_C"/>
    <property type="match status" value="1"/>
</dbReference>
<dbReference type="SMART" id="SM01193">
    <property type="entry name" value="Enolase_N"/>
    <property type="match status" value="1"/>
</dbReference>
<dbReference type="SUPFAM" id="SSF51604">
    <property type="entry name" value="Enolase C-terminal domain-like"/>
    <property type="match status" value="1"/>
</dbReference>
<dbReference type="SUPFAM" id="SSF54826">
    <property type="entry name" value="Enolase N-terminal domain-like"/>
    <property type="match status" value="1"/>
</dbReference>
<dbReference type="PROSITE" id="PS00164">
    <property type="entry name" value="ENOLASE"/>
    <property type="match status" value="1"/>
</dbReference>
<reference key="1">
    <citation type="journal article" date="2005" name="Nat. Biotechnol.">
        <title>The complete genome sequence of the meat-borne lactic acid bacterium Lactobacillus sakei 23K.</title>
        <authorList>
            <person name="Chaillou S."/>
            <person name="Champomier-Verges M.-C."/>
            <person name="Cornet M."/>
            <person name="Crutz-Le Coq A.-M."/>
            <person name="Dudez A.-M."/>
            <person name="Martin V."/>
            <person name="Beaufils S."/>
            <person name="Darbon-Rongere E."/>
            <person name="Bossy R."/>
            <person name="Loux V."/>
            <person name="Zagorec M."/>
        </authorList>
    </citation>
    <scope>NUCLEOTIDE SEQUENCE [LARGE SCALE GENOMIC DNA]</scope>
    <source>
        <strain>23K</strain>
    </source>
</reference>
<protein>
    <recommendedName>
        <fullName evidence="1">Enolase</fullName>
        <ecNumber evidence="1">4.2.1.11</ecNumber>
    </recommendedName>
    <alternativeName>
        <fullName evidence="1">2-phospho-D-glycerate hydro-lyase</fullName>
    </alternativeName>
    <alternativeName>
        <fullName evidence="1">2-phosphoglycerate dehydratase</fullName>
    </alternativeName>
</protein>
<keyword id="KW-0963">Cytoplasm</keyword>
<keyword id="KW-0324">Glycolysis</keyword>
<keyword id="KW-0456">Lyase</keyword>
<keyword id="KW-0460">Magnesium</keyword>
<keyword id="KW-0479">Metal-binding</keyword>
<keyword id="KW-1185">Reference proteome</keyword>
<keyword id="KW-0964">Secreted</keyword>
<organism>
    <name type="scientific">Latilactobacillus sakei subsp. sakei (strain 23K)</name>
    <name type="common">Lactobacillus sakei subsp. sakei</name>
    <dbReference type="NCBI Taxonomy" id="314315"/>
    <lineage>
        <taxon>Bacteria</taxon>
        <taxon>Bacillati</taxon>
        <taxon>Bacillota</taxon>
        <taxon>Bacilli</taxon>
        <taxon>Lactobacillales</taxon>
        <taxon>Lactobacillaceae</taxon>
        <taxon>Latilactobacillus</taxon>
    </lineage>
</organism>
<accession>Q38Y18</accession>
<feature type="chain" id="PRO_0000267048" description="Enolase">
    <location>
        <begin position="1"/>
        <end position="431"/>
    </location>
</feature>
<feature type="active site" description="Proton donor" evidence="1">
    <location>
        <position position="205"/>
    </location>
</feature>
<feature type="active site" description="Proton acceptor" evidence="1">
    <location>
        <position position="340"/>
    </location>
</feature>
<feature type="binding site" evidence="1">
    <location>
        <position position="163"/>
    </location>
    <ligand>
        <name>(2R)-2-phosphoglycerate</name>
        <dbReference type="ChEBI" id="CHEBI:58289"/>
    </ligand>
</feature>
<feature type="binding site" evidence="1">
    <location>
        <position position="242"/>
    </location>
    <ligand>
        <name>Mg(2+)</name>
        <dbReference type="ChEBI" id="CHEBI:18420"/>
    </ligand>
</feature>
<feature type="binding site" evidence="1">
    <location>
        <position position="288"/>
    </location>
    <ligand>
        <name>Mg(2+)</name>
        <dbReference type="ChEBI" id="CHEBI:18420"/>
    </ligand>
</feature>
<feature type="binding site" evidence="1">
    <location>
        <position position="315"/>
    </location>
    <ligand>
        <name>Mg(2+)</name>
        <dbReference type="ChEBI" id="CHEBI:18420"/>
    </ligand>
</feature>
<feature type="binding site" evidence="1">
    <location>
        <position position="340"/>
    </location>
    <ligand>
        <name>(2R)-2-phosphoglycerate</name>
        <dbReference type="ChEBI" id="CHEBI:58289"/>
    </ligand>
</feature>
<feature type="binding site" evidence="1">
    <location>
        <position position="369"/>
    </location>
    <ligand>
        <name>(2R)-2-phosphoglycerate</name>
        <dbReference type="ChEBI" id="CHEBI:58289"/>
    </ligand>
</feature>
<feature type="binding site" evidence="1">
    <location>
        <position position="370"/>
    </location>
    <ligand>
        <name>(2R)-2-phosphoglycerate</name>
        <dbReference type="ChEBI" id="CHEBI:58289"/>
    </ligand>
</feature>
<feature type="binding site" evidence="1">
    <location>
        <position position="391"/>
    </location>
    <ligand>
        <name>(2R)-2-phosphoglycerate</name>
        <dbReference type="ChEBI" id="CHEBI:58289"/>
    </ligand>
</feature>
<gene>
    <name evidence="1" type="primary">eno</name>
    <name type="ordered locus">LCA_0607</name>
</gene>
<proteinExistence type="inferred from homology"/>